<comment type="function">
    <text evidence="1">Catalyzes the last two sequential reactions in the de novo biosynthetic pathway for UDP-N-acetylglucosamine (UDP-GlcNAc). The C-terminal domain catalyzes the transfer of acetyl group from acetyl coenzyme A to glucosamine-1-phosphate (GlcN-1-P) to produce N-acetylglucosamine-1-phosphate (GlcNAc-1-P), which is converted into UDP-GlcNAc by the transfer of uridine 5-monophosphate (from uridine 5-triphosphate), a reaction catalyzed by the N-terminal domain.</text>
</comment>
<comment type="catalytic activity">
    <reaction evidence="1">
        <text>alpha-D-glucosamine 1-phosphate + acetyl-CoA = N-acetyl-alpha-D-glucosamine 1-phosphate + CoA + H(+)</text>
        <dbReference type="Rhea" id="RHEA:13725"/>
        <dbReference type="ChEBI" id="CHEBI:15378"/>
        <dbReference type="ChEBI" id="CHEBI:57287"/>
        <dbReference type="ChEBI" id="CHEBI:57288"/>
        <dbReference type="ChEBI" id="CHEBI:57776"/>
        <dbReference type="ChEBI" id="CHEBI:58516"/>
        <dbReference type="EC" id="2.3.1.157"/>
    </reaction>
</comment>
<comment type="catalytic activity">
    <reaction evidence="1">
        <text>N-acetyl-alpha-D-glucosamine 1-phosphate + UTP + H(+) = UDP-N-acetyl-alpha-D-glucosamine + diphosphate</text>
        <dbReference type="Rhea" id="RHEA:13509"/>
        <dbReference type="ChEBI" id="CHEBI:15378"/>
        <dbReference type="ChEBI" id="CHEBI:33019"/>
        <dbReference type="ChEBI" id="CHEBI:46398"/>
        <dbReference type="ChEBI" id="CHEBI:57705"/>
        <dbReference type="ChEBI" id="CHEBI:57776"/>
        <dbReference type="EC" id="2.7.7.23"/>
    </reaction>
</comment>
<comment type="cofactor">
    <cofactor evidence="1">
        <name>Mg(2+)</name>
        <dbReference type="ChEBI" id="CHEBI:18420"/>
    </cofactor>
    <text evidence="1">Binds 1 Mg(2+) ion per subunit.</text>
</comment>
<comment type="pathway">
    <text evidence="1">Nucleotide-sugar biosynthesis; UDP-N-acetyl-alpha-D-glucosamine biosynthesis; N-acetyl-alpha-D-glucosamine 1-phosphate from alpha-D-glucosamine 6-phosphate (route II): step 2/2.</text>
</comment>
<comment type="pathway">
    <text evidence="1">Nucleotide-sugar biosynthesis; UDP-N-acetyl-alpha-D-glucosamine biosynthesis; UDP-N-acetyl-alpha-D-glucosamine from N-acetyl-alpha-D-glucosamine 1-phosphate: step 1/1.</text>
</comment>
<comment type="pathway">
    <text evidence="1">Bacterial outer membrane biogenesis; LPS lipid A biosynthesis.</text>
</comment>
<comment type="subunit">
    <text evidence="1">Homotrimer.</text>
</comment>
<comment type="subcellular location">
    <subcellularLocation>
        <location evidence="1">Cytoplasm</location>
    </subcellularLocation>
</comment>
<comment type="similarity">
    <text evidence="1">In the N-terminal section; belongs to the N-acetylglucosamine-1-phosphate uridyltransferase family.</text>
</comment>
<comment type="similarity">
    <text evidence="1">In the C-terminal section; belongs to the transferase hexapeptide repeat family.</text>
</comment>
<accession>B3E414</accession>
<dbReference type="EC" id="2.7.7.23" evidence="1"/>
<dbReference type="EC" id="2.3.1.157" evidence="1"/>
<dbReference type="EMBL" id="CP001089">
    <property type="protein sequence ID" value="ACD94428.1"/>
    <property type="molecule type" value="Genomic_DNA"/>
</dbReference>
<dbReference type="RefSeq" id="WP_012468784.1">
    <property type="nucleotide sequence ID" value="NC_010814.1"/>
</dbReference>
<dbReference type="SMR" id="B3E414"/>
<dbReference type="STRING" id="398767.Glov_0702"/>
<dbReference type="KEGG" id="glo:Glov_0702"/>
<dbReference type="eggNOG" id="COG1207">
    <property type="taxonomic scope" value="Bacteria"/>
</dbReference>
<dbReference type="HOGENOM" id="CLU_029499_15_2_7"/>
<dbReference type="OrthoDB" id="9775031at2"/>
<dbReference type="UniPathway" id="UPA00113">
    <property type="reaction ID" value="UER00532"/>
</dbReference>
<dbReference type="UniPathway" id="UPA00113">
    <property type="reaction ID" value="UER00533"/>
</dbReference>
<dbReference type="UniPathway" id="UPA00973"/>
<dbReference type="Proteomes" id="UP000002420">
    <property type="component" value="Chromosome"/>
</dbReference>
<dbReference type="GO" id="GO:0005737">
    <property type="term" value="C:cytoplasm"/>
    <property type="evidence" value="ECO:0007669"/>
    <property type="project" value="UniProtKB-SubCell"/>
</dbReference>
<dbReference type="GO" id="GO:0016020">
    <property type="term" value="C:membrane"/>
    <property type="evidence" value="ECO:0007669"/>
    <property type="project" value="GOC"/>
</dbReference>
<dbReference type="GO" id="GO:0019134">
    <property type="term" value="F:glucosamine-1-phosphate N-acetyltransferase activity"/>
    <property type="evidence" value="ECO:0007669"/>
    <property type="project" value="UniProtKB-UniRule"/>
</dbReference>
<dbReference type="GO" id="GO:0000287">
    <property type="term" value="F:magnesium ion binding"/>
    <property type="evidence" value="ECO:0007669"/>
    <property type="project" value="UniProtKB-UniRule"/>
</dbReference>
<dbReference type="GO" id="GO:0003977">
    <property type="term" value="F:UDP-N-acetylglucosamine diphosphorylase activity"/>
    <property type="evidence" value="ECO:0007669"/>
    <property type="project" value="UniProtKB-UniRule"/>
</dbReference>
<dbReference type="GO" id="GO:0000902">
    <property type="term" value="P:cell morphogenesis"/>
    <property type="evidence" value="ECO:0007669"/>
    <property type="project" value="UniProtKB-UniRule"/>
</dbReference>
<dbReference type="GO" id="GO:0071555">
    <property type="term" value="P:cell wall organization"/>
    <property type="evidence" value="ECO:0007669"/>
    <property type="project" value="UniProtKB-KW"/>
</dbReference>
<dbReference type="GO" id="GO:0009245">
    <property type="term" value="P:lipid A biosynthetic process"/>
    <property type="evidence" value="ECO:0007669"/>
    <property type="project" value="UniProtKB-UniRule"/>
</dbReference>
<dbReference type="GO" id="GO:0009252">
    <property type="term" value="P:peptidoglycan biosynthetic process"/>
    <property type="evidence" value="ECO:0007669"/>
    <property type="project" value="UniProtKB-UniRule"/>
</dbReference>
<dbReference type="GO" id="GO:0008360">
    <property type="term" value="P:regulation of cell shape"/>
    <property type="evidence" value="ECO:0007669"/>
    <property type="project" value="UniProtKB-KW"/>
</dbReference>
<dbReference type="GO" id="GO:0006048">
    <property type="term" value="P:UDP-N-acetylglucosamine biosynthetic process"/>
    <property type="evidence" value="ECO:0007669"/>
    <property type="project" value="UniProtKB-UniPathway"/>
</dbReference>
<dbReference type="CDD" id="cd02540">
    <property type="entry name" value="GT2_GlmU_N_bac"/>
    <property type="match status" value="1"/>
</dbReference>
<dbReference type="CDD" id="cd03353">
    <property type="entry name" value="LbH_GlmU_C"/>
    <property type="match status" value="1"/>
</dbReference>
<dbReference type="Gene3D" id="2.160.10.10">
    <property type="entry name" value="Hexapeptide repeat proteins"/>
    <property type="match status" value="1"/>
</dbReference>
<dbReference type="Gene3D" id="3.90.550.10">
    <property type="entry name" value="Spore Coat Polysaccharide Biosynthesis Protein SpsA, Chain A"/>
    <property type="match status" value="1"/>
</dbReference>
<dbReference type="HAMAP" id="MF_01631">
    <property type="entry name" value="GlmU"/>
    <property type="match status" value="1"/>
</dbReference>
<dbReference type="InterPro" id="IPR005882">
    <property type="entry name" value="Bifunctional_GlmU"/>
</dbReference>
<dbReference type="InterPro" id="IPR050065">
    <property type="entry name" value="GlmU-like"/>
</dbReference>
<dbReference type="InterPro" id="IPR038009">
    <property type="entry name" value="GlmU_C_LbH"/>
</dbReference>
<dbReference type="InterPro" id="IPR001451">
    <property type="entry name" value="Hexapep"/>
</dbReference>
<dbReference type="InterPro" id="IPR018357">
    <property type="entry name" value="Hexapep_transf_CS"/>
</dbReference>
<dbReference type="InterPro" id="IPR025877">
    <property type="entry name" value="MobA-like_NTP_Trfase"/>
</dbReference>
<dbReference type="InterPro" id="IPR029044">
    <property type="entry name" value="Nucleotide-diphossugar_trans"/>
</dbReference>
<dbReference type="InterPro" id="IPR011004">
    <property type="entry name" value="Trimer_LpxA-like_sf"/>
</dbReference>
<dbReference type="NCBIfam" id="TIGR01173">
    <property type="entry name" value="glmU"/>
    <property type="match status" value="1"/>
</dbReference>
<dbReference type="NCBIfam" id="NF010934">
    <property type="entry name" value="PRK14354.1"/>
    <property type="match status" value="1"/>
</dbReference>
<dbReference type="NCBIfam" id="NF010935">
    <property type="entry name" value="PRK14355.1"/>
    <property type="match status" value="1"/>
</dbReference>
<dbReference type="PANTHER" id="PTHR43584:SF3">
    <property type="entry name" value="BIFUNCTIONAL PROTEIN GLMU"/>
    <property type="match status" value="1"/>
</dbReference>
<dbReference type="PANTHER" id="PTHR43584">
    <property type="entry name" value="NUCLEOTIDYL TRANSFERASE"/>
    <property type="match status" value="1"/>
</dbReference>
<dbReference type="Pfam" id="PF00132">
    <property type="entry name" value="Hexapep"/>
    <property type="match status" value="1"/>
</dbReference>
<dbReference type="Pfam" id="PF12804">
    <property type="entry name" value="NTP_transf_3"/>
    <property type="match status" value="1"/>
</dbReference>
<dbReference type="SUPFAM" id="SSF53448">
    <property type="entry name" value="Nucleotide-diphospho-sugar transferases"/>
    <property type="match status" value="1"/>
</dbReference>
<dbReference type="SUPFAM" id="SSF51161">
    <property type="entry name" value="Trimeric LpxA-like enzymes"/>
    <property type="match status" value="1"/>
</dbReference>
<dbReference type="PROSITE" id="PS00101">
    <property type="entry name" value="HEXAPEP_TRANSFERASES"/>
    <property type="match status" value="1"/>
</dbReference>
<reference key="1">
    <citation type="submission" date="2008-05" db="EMBL/GenBank/DDBJ databases">
        <title>Complete sequence of chromosome of Geobacter lovleyi SZ.</title>
        <authorList>
            <consortium name="US DOE Joint Genome Institute"/>
            <person name="Lucas S."/>
            <person name="Copeland A."/>
            <person name="Lapidus A."/>
            <person name="Glavina del Rio T."/>
            <person name="Dalin E."/>
            <person name="Tice H."/>
            <person name="Bruce D."/>
            <person name="Goodwin L."/>
            <person name="Pitluck S."/>
            <person name="Chertkov O."/>
            <person name="Meincke L."/>
            <person name="Brettin T."/>
            <person name="Detter J.C."/>
            <person name="Han C."/>
            <person name="Tapia R."/>
            <person name="Kuske C.R."/>
            <person name="Schmutz J."/>
            <person name="Larimer F."/>
            <person name="Land M."/>
            <person name="Hauser L."/>
            <person name="Kyrpides N."/>
            <person name="Mikhailova N."/>
            <person name="Sung Y."/>
            <person name="Fletcher K.E."/>
            <person name="Ritalahti K.M."/>
            <person name="Loeffler F.E."/>
            <person name="Richardson P."/>
        </authorList>
    </citation>
    <scope>NUCLEOTIDE SEQUENCE [LARGE SCALE GENOMIC DNA]</scope>
    <source>
        <strain>ATCC BAA-1151 / DSM 17278 / SZ</strain>
    </source>
</reference>
<gene>
    <name evidence="1" type="primary">glmU</name>
    <name type="ordered locus">Glov_0702</name>
</gene>
<sequence length="460" mass="48254">MAISAALILAAGKGTRMKSALVKVLHELAGRPMLGWPLAAAREAGAGQIVIVAGHQADQVQKRFGADAGIRIALQEEQLGTGHAVSCSLDQLDGLSGAVLILCGDTPLLTAATLQRLAAEHAASGAAVTVLTAKLDRPFGYGRIVRDSEGRVRRIVEQKDASPEEQAIDEVNSGIYCMELEFLRSHIGRLGSENAQNEYYLTDLVGIAVAEHAGCSAVVADDPDEIMGVNDRVQLAHAARVLRQRVNLQLMLAGVTLIDPDQTYIDADVQVGNDTIIWPGCVLRGATSIGSGCTLENNVRVSDCVIADRVQLKAGSVLSEAQVAEDVSVGPMAHLRPGSVLQAQVKIGNFVETKKVVMGTGSKASHLTYLGDAEIGSDVNIGCGTITCNYDGRHKHKTVIGDGVFVGSDVQLVAPVTVGANALIAAGTTVTQDVPPDSLAIARTPQVNKTGWCLKKRDNG</sequence>
<proteinExistence type="inferred from homology"/>
<name>GLMU_TRIL1</name>
<feature type="chain" id="PRO_1000186456" description="Bifunctional protein GlmU">
    <location>
        <begin position="1"/>
        <end position="460"/>
    </location>
</feature>
<feature type="region of interest" description="Pyrophosphorylase" evidence="1">
    <location>
        <begin position="1"/>
        <end position="232"/>
    </location>
</feature>
<feature type="region of interest" description="Linker" evidence="1">
    <location>
        <begin position="233"/>
        <end position="253"/>
    </location>
</feature>
<feature type="region of interest" description="N-acetyltransferase" evidence="1">
    <location>
        <begin position="254"/>
        <end position="460"/>
    </location>
</feature>
<feature type="active site" description="Proton acceptor" evidence="1">
    <location>
        <position position="366"/>
    </location>
</feature>
<feature type="binding site" evidence="1">
    <location>
        <begin position="9"/>
        <end position="12"/>
    </location>
    <ligand>
        <name>UDP-N-acetyl-alpha-D-glucosamine</name>
        <dbReference type="ChEBI" id="CHEBI:57705"/>
    </ligand>
</feature>
<feature type="binding site" evidence="1">
    <location>
        <position position="23"/>
    </location>
    <ligand>
        <name>UDP-N-acetyl-alpha-D-glucosamine</name>
        <dbReference type="ChEBI" id="CHEBI:57705"/>
    </ligand>
</feature>
<feature type="binding site" evidence="1">
    <location>
        <position position="75"/>
    </location>
    <ligand>
        <name>UDP-N-acetyl-alpha-D-glucosamine</name>
        <dbReference type="ChEBI" id="CHEBI:57705"/>
    </ligand>
</feature>
<feature type="binding site" evidence="1">
    <location>
        <begin position="80"/>
        <end position="81"/>
    </location>
    <ligand>
        <name>UDP-N-acetyl-alpha-D-glucosamine</name>
        <dbReference type="ChEBI" id="CHEBI:57705"/>
    </ligand>
</feature>
<feature type="binding site" evidence="1">
    <location>
        <position position="105"/>
    </location>
    <ligand>
        <name>Mg(2+)</name>
        <dbReference type="ChEBI" id="CHEBI:18420"/>
    </ligand>
</feature>
<feature type="binding site" evidence="1">
    <location>
        <position position="142"/>
    </location>
    <ligand>
        <name>UDP-N-acetyl-alpha-D-glucosamine</name>
        <dbReference type="ChEBI" id="CHEBI:57705"/>
    </ligand>
</feature>
<feature type="binding site" evidence="1">
    <location>
        <position position="157"/>
    </location>
    <ligand>
        <name>UDP-N-acetyl-alpha-D-glucosamine</name>
        <dbReference type="ChEBI" id="CHEBI:57705"/>
    </ligand>
</feature>
<feature type="binding site" evidence="1">
    <location>
        <position position="172"/>
    </location>
    <ligand>
        <name>UDP-N-acetyl-alpha-D-glucosamine</name>
        <dbReference type="ChEBI" id="CHEBI:57705"/>
    </ligand>
</feature>
<feature type="binding site" evidence="1">
    <location>
        <position position="230"/>
    </location>
    <ligand>
        <name>Mg(2+)</name>
        <dbReference type="ChEBI" id="CHEBI:18420"/>
    </ligand>
</feature>
<feature type="binding site" evidence="1">
    <location>
        <position position="230"/>
    </location>
    <ligand>
        <name>UDP-N-acetyl-alpha-D-glucosamine</name>
        <dbReference type="ChEBI" id="CHEBI:57705"/>
    </ligand>
</feature>
<feature type="binding site" evidence="1">
    <location>
        <position position="336"/>
    </location>
    <ligand>
        <name>UDP-N-acetyl-alpha-D-glucosamine</name>
        <dbReference type="ChEBI" id="CHEBI:57705"/>
    </ligand>
</feature>
<feature type="binding site" evidence="1">
    <location>
        <position position="354"/>
    </location>
    <ligand>
        <name>UDP-N-acetyl-alpha-D-glucosamine</name>
        <dbReference type="ChEBI" id="CHEBI:57705"/>
    </ligand>
</feature>
<feature type="binding site" evidence="1">
    <location>
        <position position="369"/>
    </location>
    <ligand>
        <name>UDP-N-acetyl-alpha-D-glucosamine</name>
        <dbReference type="ChEBI" id="CHEBI:57705"/>
    </ligand>
</feature>
<feature type="binding site" evidence="1">
    <location>
        <position position="380"/>
    </location>
    <ligand>
        <name>UDP-N-acetyl-alpha-D-glucosamine</name>
        <dbReference type="ChEBI" id="CHEBI:57705"/>
    </ligand>
</feature>
<feature type="binding site" evidence="1">
    <location>
        <begin position="389"/>
        <end position="390"/>
    </location>
    <ligand>
        <name>acetyl-CoA</name>
        <dbReference type="ChEBI" id="CHEBI:57288"/>
    </ligand>
</feature>
<feature type="binding site" evidence="1">
    <location>
        <position position="408"/>
    </location>
    <ligand>
        <name>acetyl-CoA</name>
        <dbReference type="ChEBI" id="CHEBI:57288"/>
    </ligand>
</feature>
<feature type="binding site" evidence="1">
    <location>
        <position position="426"/>
    </location>
    <ligand>
        <name>acetyl-CoA</name>
        <dbReference type="ChEBI" id="CHEBI:57288"/>
    </ligand>
</feature>
<feature type="binding site" evidence="1">
    <location>
        <position position="443"/>
    </location>
    <ligand>
        <name>acetyl-CoA</name>
        <dbReference type="ChEBI" id="CHEBI:57288"/>
    </ligand>
</feature>
<keyword id="KW-0012">Acyltransferase</keyword>
<keyword id="KW-0133">Cell shape</keyword>
<keyword id="KW-0961">Cell wall biogenesis/degradation</keyword>
<keyword id="KW-0963">Cytoplasm</keyword>
<keyword id="KW-0460">Magnesium</keyword>
<keyword id="KW-0479">Metal-binding</keyword>
<keyword id="KW-0511">Multifunctional enzyme</keyword>
<keyword id="KW-0548">Nucleotidyltransferase</keyword>
<keyword id="KW-0573">Peptidoglycan synthesis</keyword>
<keyword id="KW-1185">Reference proteome</keyword>
<keyword id="KW-0677">Repeat</keyword>
<keyword id="KW-0808">Transferase</keyword>
<evidence type="ECO:0000255" key="1">
    <source>
        <dbReference type="HAMAP-Rule" id="MF_01631"/>
    </source>
</evidence>
<organism>
    <name type="scientific">Trichlorobacter lovleyi (strain ATCC BAA-1151 / DSM 17278 / SZ)</name>
    <name type="common">Geobacter lovleyi</name>
    <dbReference type="NCBI Taxonomy" id="398767"/>
    <lineage>
        <taxon>Bacteria</taxon>
        <taxon>Pseudomonadati</taxon>
        <taxon>Thermodesulfobacteriota</taxon>
        <taxon>Desulfuromonadia</taxon>
        <taxon>Geobacterales</taxon>
        <taxon>Geobacteraceae</taxon>
        <taxon>Trichlorobacter</taxon>
    </lineage>
</organism>
<protein>
    <recommendedName>
        <fullName evidence="1">Bifunctional protein GlmU</fullName>
    </recommendedName>
    <domain>
        <recommendedName>
            <fullName evidence="1">UDP-N-acetylglucosamine pyrophosphorylase</fullName>
            <ecNumber evidence="1">2.7.7.23</ecNumber>
        </recommendedName>
        <alternativeName>
            <fullName evidence="1">N-acetylglucosamine-1-phosphate uridyltransferase</fullName>
        </alternativeName>
    </domain>
    <domain>
        <recommendedName>
            <fullName evidence="1">Glucosamine-1-phosphate N-acetyltransferase</fullName>
            <ecNumber evidence="1">2.3.1.157</ecNumber>
        </recommendedName>
    </domain>
</protein>